<accession>Q3V3K7</accession>
<accession>B2RSZ6</accession>
<accession>Q3V174</accession>
<name>GCNT7_MOUSE</name>
<evidence type="ECO:0000250" key="1">
    <source>
        <dbReference type="UniProtKB" id="O95395"/>
    </source>
</evidence>
<evidence type="ECO:0000250" key="2">
    <source>
        <dbReference type="UniProtKB" id="Q7YQE1"/>
    </source>
</evidence>
<evidence type="ECO:0000255" key="3"/>
<evidence type="ECO:0000256" key="4">
    <source>
        <dbReference type="SAM" id="MobiDB-lite"/>
    </source>
</evidence>
<evidence type="ECO:0000303" key="5">
    <source>
    </source>
</evidence>
<evidence type="ECO:0000305" key="6"/>
<evidence type="ECO:0000312" key="7">
    <source>
        <dbReference type="MGI" id="MGI:3606143"/>
    </source>
</evidence>
<organism>
    <name type="scientific">Mus musculus</name>
    <name type="common">Mouse</name>
    <dbReference type="NCBI Taxonomy" id="10090"/>
    <lineage>
        <taxon>Eukaryota</taxon>
        <taxon>Metazoa</taxon>
        <taxon>Chordata</taxon>
        <taxon>Craniata</taxon>
        <taxon>Vertebrata</taxon>
        <taxon>Euteleostomi</taxon>
        <taxon>Mammalia</taxon>
        <taxon>Eutheria</taxon>
        <taxon>Euarchontoglires</taxon>
        <taxon>Glires</taxon>
        <taxon>Rodentia</taxon>
        <taxon>Myomorpha</taxon>
        <taxon>Muroidea</taxon>
        <taxon>Muridae</taxon>
        <taxon>Murinae</taxon>
        <taxon>Mus</taxon>
        <taxon>Mus</taxon>
    </lineage>
</organism>
<comment type="function">
    <text evidence="1">Probable glycosyltransferase.</text>
</comment>
<comment type="pathway">
    <text evidence="1">Protein modification; protein glycosylation.</text>
</comment>
<comment type="subcellular location">
    <subcellularLocation>
        <location evidence="1">Golgi apparatus membrane</location>
        <topology evidence="3">Single-pass type II membrane protein</topology>
    </subcellularLocation>
</comment>
<comment type="alternative products">
    <event type="alternative splicing"/>
    <isoform>
        <id>Q3V3K7-1</id>
        <name>1</name>
        <sequence type="displayed"/>
    </isoform>
    <isoform>
        <id>Q3V3K7-2</id>
        <name>2</name>
        <sequence type="described" ref="VSP_027537"/>
    </isoform>
</comment>
<comment type="similarity">
    <text evidence="6">Belongs to the glycosyltransferase 14 family.</text>
</comment>
<feature type="chain" id="PRO_0000299039" description="Probable beta-1,3-galactosyl-O-glycosyl-glycoprotein beta-1,6-N-acetylglucosaminyltransferase 7">
    <location>
        <begin position="1"/>
        <end position="433"/>
    </location>
</feature>
<feature type="topological domain" description="Cytoplasmic" evidence="3">
    <location>
        <begin position="1"/>
        <end position="8"/>
    </location>
</feature>
<feature type="transmembrane region" description="Helical; Signal-anchor for type II membrane protein" evidence="3">
    <location>
        <begin position="9"/>
        <end position="25"/>
    </location>
</feature>
<feature type="topological domain" description="Extracellular" evidence="3">
    <location>
        <begin position="26"/>
        <end position="433"/>
    </location>
</feature>
<feature type="region of interest" description="Disordered" evidence="4">
    <location>
        <begin position="233"/>
        <end position="275"/>
    </location>
</feature>
<feature type="region of interest" description="Disordered" evidence="4">
    <location>
        <begin position="413"/>
        <end position="433"/>
    </location>
</feature>
<feature type="compositionally biased region" description="Polar residues" evidence="4">
    <location>
        <begin position="258"/>
        <end position="275"/>
    </location>
</feature>
<feature type="compositionally biased region" description="Polar residues" evidence="4">
    <location>
        <begin position="421"/>
        <end position="433"/>
    </location>
</feature>
<feature type="glycosylation site" description="N-linked (GlcNAc...) asparagine" evidence="3">
    <location>
        <position position="112"/>
    </location>
</feature>
<feature type="disulfide bond" evidence="2">
    <location>
        <begin position="57"/>
        <end position="209"/>
    </location>
</feature>
<feature type="disulfide bond" evidence="2">
    <location>
        <begin position="143"/>
        <end position="358"/>
    </location>
</feature>
<feature type="disulfide bond" evidence="2">
    <location>
        <begin position="164"/>
        <end position="191"/>
    </location>
</feature>
<feature type="disulfide bond" evidence="2">
    <location>
        <begin position="367"/>
        <end position="398"/>
    </location>
</feature>
<feature type="splice variant" id="VSP_027537" description="In isoform 2." evidence="5">
    <location>
        <begin position="328"/>
        <end position="359"/>
    </location>
</feature>
<sequence length="433" mass="48580">MSQLRTTKAGLVACGMICAFIFLYLRNPGPEEAEAEAEAEPTNPAVVECGFYPDELCSALFDGKKAAPQIAQFCKPPQNSEVPARLRTPGNCSRLARGLHFITRPLSAEEGNFSLAYVIHAPRELVMFVRLLRAIYAPQNVYCIHSDENAPKKFKSAMQTFVDCFGNIFLSSKTQKVAHDNLRRLQAEIDCMRDLVHSPFQWHYVMNLCGQEFPIKTNKEIIYDIRTRWKGKNITPGVTPPANSKPKTGQGPPKPSPDENSYTAPNTIFKQSPPHNLTISSGSAHYALTRKFVEFVLTDPRAKDMLQWSKDIQSPEKHYWVTLNRLKDAPGATPDAGWEGHIRATKWRTEAGDGRKGCTDHDAQDTCVYGLGDLPGLIRLPAFFATLEPSSDPLVGVCLERRHRLRALQQAEVPPEPHWQFPQQSHFNSQPHH</sequence>
<keyword id="KW-0025">Alternative splicing</keyword>
<keyword id="KW-1015">Disulfide bond</keyword>
<keyword id="KW-0325">Glycoprotein</keyword>
<keyword id="KW-0328">Glycosyltransferase</keyword>
<keyword id="KW-0333">Golgi apparatus</keyword>
<keyword id="KW-0472">Membrane</keyword>
<keyword id="KW-1185">Reference proteome</keyword>
<keyword id="KW-0735">Signal-anchor</keyword>
<keyword id="KW-0808">Transferase</keyword>
<keyword id="KW-0812">Transmembrane</keyword>
<keyword id="KW-1133">Transmembrane helix</keyword>
<reference key="1">
    <citation type="journal article" date="2005" name="Science">
        <title>The transcriptional landscape of the mammalian genome.</title>
        <authorList>
            <person name="Carninci P."/>
            <person name="Kasukawa T."/>
            <person name="Katayama S."/>
            <person name="Gough J."/>
            <person name="Frith M.C."/>
            <person name="Maeda N."/>
            <person name="Oyama R."/>
            <person name="Ravasi T."/>
            <person name="Lenhard B."/>
            <person name="Wells C."/>
            <person name="Kodzius R."/>
            <person name="Shimokawa K."/>
            <person name="Bajic V.B."/>
            <person name="Brenner S.E."/>
            <person name="Batalov S."/>
            <person name="Forrest A.R."/>
            <person name="Zavolan M."/>
            <person name="Davis M.J."/>
            <person name="Wilming L.G."/>
            <person name="Aidinis V."/>
            <person name="Allen J.E."/>
            <person name="Ambesi-Impiombato A."/>
            <person name="Apweiler R."/>
            <person name="Aturaliya R.N."/>
            <person name="Bailey T.L."/>
            <person name="Bansal M."/>
            <person name="Baxter L."/>
            <person name="Beisel K.W."/>
            <person name="Bersano T."/>
            <person name="Bono H."/>
            <person name="Chalk A.M."/>
            <person name="Chiu K.P."/>
            <person name="Choudhary V."/>
            <person name="Christoffels A."/>
            <person name="Clutterbuck D.R."/>
            <person name="Crowe M.L."/>
            <person name="Dalla E."/>
            <person name="Dalrymple B.P."/>
            <person name="de Bono B."/>
            <person name="Della Gatta G."/>
            <person name="di Bernardo D."/>
            <person name="Down T."/>
            <person name="Engstrom P."/>
            <person name="Fagiolini M."/>
            <person name="Faulkner G."/>
            <person name="Fletcher C.F."/>
            <person name="Fukushima T."/>
            <person name="Furuno M."/>
            <person name="Futaki S."/>
            <person name="Gariboldi M."/>
            <person name="Georgii-Hemming P."/>
            <person name="Gingeras T.R."/>
            <person name="Gojobori T."/>
            <person name="Green R.E."/>
            <person name="Gustincich S."/>
            <person name="Harbers M."/>
            <person name="Hayashi Y."/>
            <person name="Hensch T.K."/>
            <person name="Hirokawa N."/>
            <person name="Hill D."/>
            <person name="Huminiecki L."/>
            <person name="Iacono M."/>
            <person name="Ikeo K."/>
            <person name="Iwama A."/>
            <person name="Ishikawa T."/>
            <person name="Jakt M."/>
            <person name="Kanapin A."/>
            <person name="Katoh M."/>
            <person name="Kawasawa Y."/>
            <person name="Kelso J."/>
            <person name="Kitamura H."/>
            <person name="Kitano H."/>
            <person name="Kollias G."/>
            <person name="Krishnan S.P."/>
            <person name="Kruger A."/>
            <person name="Kummerfeld S.K."/>
            <person name="Kurochkin I.V."/>
            <person name="Lareau L.F."/>
            <person name="Lazarevic D."/>
            <person name="Lipovich L."/>
            <person name="Liu J."/>
            <person name="Liuni S."/>
            <person name="McWilliam S."/>
            <person name="Madan Babu M."/>
            <person name="Madera M."/>
            <person name="Marchionni L."/>
            <person name="Matsuda H."/>
            <person name="Matsuzawa S."/>
            <person name="Miki H."/>
            <person name="Mignone F."/>
            <person name="Miyake S."/>
            <person name="Morris K."/>
            <person name="Mottagui-Tabar S."/>
            <person name="Mulder N."/>
            <person name="Nakano N."/>
            <person name="Nakauchi H."/>
            <person name="Ng P."/>
            <person name="Nilsson R."/>
            <person name="Nishiguchi S."/>
            <person name="Nishikawa S."/>
            <person name="Nori F."/>
            <person name="Ohara O."/>
            <person name="Okazaki Y."/>
            <person name="Orlando V."/>
            <person name="Pang K.C."/>
            <person name="Pavan W.J."/>
            <person name="Pavesi G."/>
            <person name="Pesole G."/>
            <person name="Petrovsky N."/>
            <person name="Piazza S."/>
            <person name="Reed J."/>
            <person name="Reid J.F."/>
            <person name="Ring B.Z."/>
            <person name="Ringwald M."/>
            <person name="Rost B."/>
            <person name="Ruan Y."/>
            <person name="Salzberg S.L."/>
            <person name="Sandelin A."/>
            <person name="Schneider C."/>
            <person name="Schoenbach C."/>
            <person name="Sekiguchi K."/>
            <person name="Semple C.A."/>
            <person name="Seno S."/>
            <person name="Sessa L."/>
            <person name="Sheng Y."/>
            <person name="Shibata Y."/>
            <person name="Shimada H."/>
            <person name="Shimada K."/>
            <person name="Silva D."/>
            <person name="Sinclair B."/>
            <person name="Sperling S."/>
            <person name="Stupka E."/>
            <person name="Sugiura K."/>
            <person name="Sultana R."/>
            <person name="Takenaka Y."/>
            <person name="Taki K."/>
            <person name="Tammoja K."/>
            <person name="Tan S.L."/>
            <person name="Tang S."/>
            <person name="Taylor M.S."/>
            <person name="Tegner J."/>
            <person name="Teichmann S.A."/>
            <person name="Ueda H.R."/>
            <person name="van Nimwegen E."/>
            <person name="Verardo R."/>
            <person name="Wei C.L."/>
            <person name="Yagi K."/>
            <person name="Yamanishi H."/>
            <person name="Zabarovsky E."/>
            <person name="Zhu S."/>
            <person name="Zimmer A."/>
            <person name="Hide W."/>
            <person name="Bult C."/>
            <person name="Grimmond S.M."/>
            <person name="Teasdale R.D."/>
            <person name="Liu E.T."/>
            <person name="Brusic V."/>
            <person name="Quackenbush J."/>
            <person name="Wahlestedt C."/>
            <person name="Mattick J.S."/>
            <person name="Hume D.A."/>
            <person name="Kai C."/>
            <person name="Sasaki D."/>
            <person name="Tomaru Y."/>
            <person name="Fukuda S."/>
            <person name="Kanamori-Katayama M."/>
            <person name="Suzuki M."/>
            <person name="Aoki J."/>
            <person name="Arakawa T."/>
            <person name="Iida J."/>
            <person name="Imamura K."/>
            <person name="Itoh M."/>
            <person name="Kato T."/>
            <person name="Kawaji H."/>
            <person name="Kawagashira N."/>
            <person name="Kawashima T."/>
            <person name="Kojima M."/>
            <person name="Kondo S."/>
            <person name="Konno H."/>
            <person name="Nakano K."/>
            <person name="Ninomiya N."/>
            <person name="Nishio T."/>
            <person name="Okada M."/>
            <person name="Plessy C."/>
            <person name="Shibata K."/>
            <person name="Shiraki T."/>
            <person name="Suzuki S."/>
            <person name="Tagami M."/>
            <person name="Waki K."/>
            <person name="Watahiki A."/>
            <person name="Okamura-Oho Y."/>
            <person name="Suzuki H."/>
            <person name="Kawai J."/>
            <person name="Hayashizaki Y."/>
        </authorList>
    </citation>
    <scope>NUCLEOTIDE SEQUENCE [LARGE SCALE MRNA] (ISOFORM 1)</scope>
    <scope>NUCLEOTIDE SEQUENCE [LARGE SCALE MRNA] OF 55-433 (ISOFORM 2)</scope>
    <source>
        <strain>C57BL/6J</strain>
        <tissue>Head</tissue>
        <tissue>Spinal cord</tissue>
    </source>
</reference>
<reference key="2">
    <citation type="journal article" date="2009" name="PLoS Biol.">
        <title>Lineage-specific biology revealed by a finished genome assembly of the mouse.</title>
        <authorList>
            <person name="Church D.M."/>
            <person name="Goodstadt L."/>
            <person name="Hillier L.W."/>
            <person name="Zody M.C."/>
            <person name="Goldstein S."/>
            <person name="She X."/>
            <person name="Bult C.J."/>
            <person name="Agarwala R."/>
            <person name="Cherry J.L."/>
            <person name="DiCuccio M."/>
            <person name="Hlavina W."/>
            <person name="Kapustin Y."/>
            <person name="Meric P."/>
            <person name="Maglott D."/>
            <person name="Birtle Z."/>
            <person name="Marques A.C."/>
            <person name="Graves T."/>
            <person name="Zhou S."/>
            <person name="Teague B."/>
            <person name="Potamousis K."/>
            <person name="Churas C."/>
            <person name="Place M."/>
            <person name="Herschleb J."/>
            <person name="Runnheim R."/>
            <person name="Forrest D."/>
            <person name="Amos-Landgraf J."/>
            <person name="Schwartz D.C."/>
            <person name="Cheng Z."/>
            <person name="Lindblad-Toh K."/>
            <person name="Eichler E.E."/>
            <person name="Ponting C.P."/>
        </authorList>
    </citation>
    <scope>NUCLEOTIDE SEQUENCE [LARGE SCALE GENOMIC DNA]</scope>
    <source>
        <strain>C57BL/6J</strain>
    </source>
</reference>
<reference key="3">
    <citation type="journal article" date="2004" name="Genome Res.">
        <title>The status, quality, and expansion of the NIH full-length cDNA project: the Mammalian Gene Collection (MGC).</title>
        <authorList>
            <consortium name="The MGC Project Team"/>
        </authorList>
    </citation>
    <scope>NUCLEOTIDE SEQUENCE [LARGE SCALE MRNA] (ISOFORM 1)</scope>
    <source>
        <tissue>Testis</tissue>
    </source>
</reference>
<protein>
    <recommendedName>
        <fullName evidence="1">Probable beta-1,3-galactosyl-O-glycosyl-glycoprotein beta-1,6-N-acetylglucosaminyltransferase 7</fullName>
        <ecNumber evidence="1">2.4.1.-</ecNumber>
    </recommendedName>
</protein>
<proteinExistence type="evidence at transcript level"/>
<dbReference type="EC" id="2.4.1.-" evidence="1"/>
<dbReference type="EMBL" id="AK039414">
    <property type="protein sequence ID" value="BAE20545.1"/>
    <property type="molecule type" value="mRNA"/>
</dbReference>
<dbReference type="EMBL" id="AK132647">
    <property type="protein sequence ID" value="BAE21278.1"/>
    <property type="molecule type" value="mRNA"/>
</dbReference>
<dbReference type="EMBL" id="AL833787">
    <property type="status" value="NOT_ANNOTATED_CDS"/>
    <property type="molecule type" value="Genomic_DNA"/>
</dbReference>
<dbReference type="EMBL" id="BC139073">
    <property type="protein sequence ID" value="AAI39074.1"/>
    <property type="molecule type" value="mRNA"/>
</dbReference>
<dbReference type="EMBL" id="BC139076">
    <property type="protein sequence ID" value="AAI39077.1"/>
    <property type="molecule type" value="mRNA"/>
</dbReference>
<dbReference type="CCDS" id="CCDS17133.1">
    <molecule id="Q3V3K7-1"/>
</dbReference>
<dbReference type="RefSeq" id="NP_001034649.1">
    <molecule id="Q3V3K7-1"/>
    <property type="nucleotide sequence ID" value="NM_001039560.3"/>
</dbReference>
<dbReference type="RefSeq" id="XP_006500059.1">
    <molecule id="Q3V3K7-1"/>
    <property type="nucleotide sequence ID" value="XM_006499996.5"/>
</dbReference>
<dbReference type="SMR" id="Q3V3K7"/>
<dbReference type="STRING" id="10090.ENSMUSP00000096659"/>
<dbReference type="CAZy" id="GT14">
    <property type="family name" value="Glycosyltransferase Family 14"/>
</dbReference>
<dbReference type="GlyCosmos" id="Q3V3K7">
    <property type="glycosylation" value="1 site, No reported glycans"/>
</dbReference>
<dbReference type="GlyGen" id="Q3V3K7">
    <property type="glycosylation" value="2 sites"/>
</dbReference>
<dbReference type="PhosphoSitePlus" id="Q3V3K7"/>
<dbReference type="PaxDb" id="10090-ENSMUSP00000096659"/>
<dbReference type="Antibodypedia" id="59236">
    <property type="antibodies" value="156 antibodies from 23 providers"/>
</dbReference>
<dbReference type="Ensembl" id="ENSMUST00000099060.2">
    <molecule id="Q3V3K7-1"/>
    <property type="protein sequence ID" value="ENSMUSP00000096659.2"/>
    <property type="gene ID" value="ENSMUSG00000074569.5"/>
</dbReference>
<dbReference type="GeneID" id="654821"/>
<dbReference type="KEGG" id="mmu:654821"/>
<dbReference type="UCSC" id="uc008ocx.1">
    <molecule id="Q3V3K7-1"/>
    <property type="organism name" value="mouse"/>
</dbReference>
<dbReference type="UCSC" id="uc012cko.1">
    <molecule id="Q3V3K7-2"/>
    <property type="organism name" value="mouse"/>
</dbReference>
<dbReference type="AGR" id="MGI:3606143"/>
<dbReference type="CTD" id="140687"/>
<dbReference type="MGI" id="MGI:3606143">
    <property type="gene designation" value="Gcnt7"/>
</dbReference>
<dbReference type="VEuPathDB" id="HostDB:ENSMUSG00000074569"/>
<dbReference type="eggNOG" id="KOG0799">
    <property type="taxonomic scope" value="Eukaryota"/>
</dbReference>
<dbReference type="GeneTree" id="ENSGT00940000160402"/>
<dbReference type="InParanoid" id="Q3V3K7"/>
<dbReference type="OMA" id="TCLERWH"/>
<dbReference type="OrthoDB" id="2019572at2759"/>
<dbReference type="PhylomeDB" id="Q3V3K7"/>
<dbReference type="TreeFam" id="TF315534"/>
<dbReference type="Reactome" id="R-MMU-913709">
    <property type="pathway name" value="O-linked glycosylation of mucins"/>
</dbReference>
<dbReference type="UniPathway" id="UPA00378"/>
<dbReference type="BioGRID-ORCS" id="654821">
    <property type="hits" value="4 hits in 77 CRISPR screens"/>
</dbReference>
<dbReference type="PRO" id="PR:Q3V3K7"/>
<dbReference type="Proteomes" id="UP000000589">
    <property type="component" value="Chromosome 2"/>
</dbReference>
<dbReference type="RNAct" id="Q3V3K7">
    <property type="molecule type" value="protein"/>
</dbReference>
<dbReference type="Bgee" id="ENSMUSG00000074569">
    <property type="expression patterns" value="Expressed in olfactory epithelium and 19 other cell types or tissues"/>
</dbReference>
<dbReference type="ExpressionAtlas" id="Q3V3K7">
    <property type="expression patterns" value="baseline and differential"/>
</dbReference>
<dbReference type="GO" id="GO:0000139">
    <property type="term" value="C:Golgi membrane"/>
    <property type="evidence" value="ECO:0007669"/>
    <property type="project" value="UniProtKB-SubCell"/>
</dbReference>
<dbReference type="GO" id="GO:0016757">
    <property type="term" value="F:glycosyltransferase activity"/>
    <property type="evidence" value="ECO:0007669"/>
    <property type="project" value="UniProtKB-KW"/>
</dbReference>
<dbReference type="GO" id="GO:0006486">
    <property type="term" value="P:protein glycosylation"/>
    <property type="evidence" value="ECO:0007669"/>
    <property type="project" value="UniProtKB-UniPathway"/>
</dbReference>
<dbReference type="InterPro" id="IPR003406">
    <property type="entry name" value="Glyco_trans_14"/>
</dbReference>
<dbReference type="PANTHER" id="PTHR19297:SF178">
    <property type="entry name" value="BETA-1,3-GALACTOSYL-O-GLYCOSYL-GLYCOPROTEIN BETA-1,6-N-ACETYLGLUCOSAMINYLTRANSFERASE 7"/>
    <property type="match status" value="1"/>
</dbReference>
<dbReference type="PANTHER" id="PTHR19297">
    <property type="entry name" value="GLYCOSYLTRANSFERASE 14 FAMILY MEMBER"/>
    <property type="match status" value="1"/>
</dbReference>
<dbReference type="Pfam" id="PF02485">
    <property type="entry name" value="Branch"/>
    <property type="match status" value="1"/>
</dbReference>
<gene>
    <name evidence="7" type="primary">Gcnt7</name>
</gene>